<feature type="chain" id="PRO_1000017167" description="tRNA pseudouridine synthase A">
    <location>
        <begin position="1"/>
        <end position="261"/>
    </location>
</feature>
<feature type="active site" description="Nucleophile" evidence="1">
    <location>
        <position position="51"/>
    </location>
</feature>
<feature type="binding site" evidence="1">
    <location>
        <position position="109"/>
    </location>
    <ligand>
        <name>substrate</name>
    </ligand>
</feature>
<keyword id="KW-0413">Isomerase</keyword>
<keyword id="KW-1185">Reference proteome</keyword>
<keyword id="KW-0819">tRNA processing</keyword>
<comment type="function">
    <text evidence="1">Formation of pseudouridine at positions 38, 39 and 40 in the anticodon stem and loop of transfer RNAs.</text>
</comment>
<comment type="catalytic activity">
    <reaction evidence="1">
        <text>uridine(38/39/40) in tRNA = pseudouridine(38/39/40) in tRNA</text>
        <dbReference type="Rhea" id="RHEA:22376"/>
        <dbReference type="Rhea" id="RHEA-COMP:10085"/>
        <dbReference type="Rhea" id="RHEA-COMP:10087"/>
        <dbReference type="ChEBI" id="CHEBI:65314"/>
        <dbReference type="ChEBI" id="CHEBI:65315"/>
        <dbReference type="EC" id="5.4.99.12"/>
    </reaction>
</comment>
<comment type="subunit">
    <text evidence="1">Homodimer.</text>
</comment>
<comment type="similarity">
    <text evidence="1">Belongs to the tRNA pseudouridine synthase TruA family.</text>
</comment>
<evidence type="ECO:0000255" key="1">
    <source>
        <dbReference type="HAMAP-Rule" id="MF_00171"/>
    </source>
</evidence>
<gene>
    <name evidence="1" type="primary">truA</name>
    <name type="ordered locus">Sden_1486</name>
</gene>
<accession>Q12P55</accession>
<dbReference type="EC" id="5.4.99.12" evidence="1"/>
<dbReference type="EMBL" id="CP000302">
    <property type="protein sequence ID" value="ABE54771.1"/>
    <property type="molecule type" value="Genomic_DNA"/>
</dbReference>
<dbReference type="RefSeq" id="WP_011495929.1">
    <property type="nucleotide sequence ID" value="NC_007954.1"/>
</dbReference>
<dbReference type="SMR" id="Q12P55"/>
<dbReference type="STRING" id="318161.Sden_1486"/>
<dbReference type="KEGG" id="sdn:Sden_1486"/>
<dbReference type="eggNOG" id="COG0101">
    <property type="taxonomic scope" value="Bacteria"/>
</dbReference>
<dbReference type="HOGENOM" id="CLU_014673_0_2_6"/>
<dbReference type="OrthoDB" id="9811823at2"/>
<dbReference type="Proteomes" id="UP000001982">
    <property type="component" value="Chromosome"/>
</dbReference>
<dbReference type="GO" id="GO:0003723">
    <property type="term" value="F:RNA binding"/>
    <property type="evidence" value="ECO:0007669"/>
    <property type="project" value="InterPro"/>
</dbReference>
<dbReference type="GO" id="GO:0160147">
    <property type="term" value="F:tRNA pseudouridine(38-40) synthase activity"/>
    <property type="evidence" value="ECO:0007669"/>
    <property type="project" value="UniProtKB-EC"/>
</dbReference>
<dbReference type="GO" id="GO:0031119">
    <property type="term" value="P:tRNA pseudouridine synthesis"/>
    <property type="evidence" value="ECO:0007669"/>
    <property type="project" value="UniProtKB-UniRule"/>
</dbReference>
<dbReference type="CDD" id="cd02570">
    <property type="entry name" value="PseudoU_synth_EcTruA"/>
    <property type="match status" value="1"/>
</dbReference>
<dbReference type="FunFam" id="3.30.70.580:FF:000001">
    <property type="entry name" value="tRNA pseudouridine synthase A"/>
    <property type="match status" value="1"/>
</dbReference>
<dbReference type="FunFam" id="3.30.70.660:FF:000001">
    <property type="entry name" value="tRNA pseudouridine synthase A"/>
    <property type="match status" value="1"/>
</dbReference>
<dbReference type="Gene3D" id="3.30.70.660">
    <property type="entry name" value="Pseudouridine synthase I, catalytic domain, C-terminal subdomain"/>
    <property type="match status" value="1"/>
</dbReference>
<dbReference type="Gene3D" id="3.30.70.580">
    <property type="entry name" value="Pseudouridine synthase I, catalytic domain, N-terminal subdomain"/>
    <property type="match status" value="1"/>
</dbReference>
<dbReference type="HAMAP" id="MF_00171">
    <property type="entry name" value="TruA"/>
    <property type="match status" value="1"/>
</dbReference>
<dbReference type="InterPro" id="IPR020103">
    <property type="entry name" value="PsdUridine_synth_cat_dom_sf"/>
</dbReference>
<dbReference type="InterPro" id="IPR001406">
    <property type="entry name" value="PsdUridine_synth_TruA"/>
</dbReference>
<dbReference type="InterPro" id="IPR020097">
    <property type="entry name" value="PsdUridine_synth_TruA_a/b_dom"/>
</dbReference>
<dbReference type="InterPro" id="IPR020095">
    <property type="entry name" value="PsdUridine_synth_TruA_C"/>
</dbReference>
<dbReference type="InterPro" id="IPR020094">
    <property type="entry name" value="TruA/RsuA/RluB/E/F_N"/>
</dbReference>
<dbReference type="NCBIfam" id="TIGR00071">
    <property type="entry name" value="hisT_truA"/>
    <property type="match status" value="1"/>
</dbReference>
<dbReference type="PANTHER" id="PTHR11142">
    <property type="entry name" value="PSEUDOURIDYLATE SYNTHASE"/>
    <property type="match status" value="1"/>
</dbReference>
<dbReference type="PANTHER" id="PTHR11142:SF0">
    <property type="entry name" value="TRNA PSEUDOURIDINE SYNTHASE-LIKE 1"/>
    <property type="match status" value="1"/>
</dbReference>
<dbReference type="Pfam" id="PF01416">
    <property type="entry name" value="PseudoU_synth_1"/>
    <property type="match status" value="2"/>
</dbReference>
<dbReference type="PIRSF" id="PIRSF001430">
    <property type="entry name" value="tRNA_psdUrid_synth"/>
    <property type="match status" value="1"/>
</dbReference>
<dbReference type="SUPFAM" id="SSF55120">
    <property type="entry name" value="Pseudouridine synthase"/>
    <property type="match status" value="1"/>
</dbReference>
<protein>
    <recommendedName>
        <fullName evidence="1">tRNA pseudouridine synthase A</fullName>
        <ecNumber evidence="1">5.4.99.12</ecNumber>
    </recommendedName>
    <alternativeName>
        <fullName evidence="1">tRNA pseudouridine(38-40) synthase</fullName>
    </alternativeName>
    <alternativeName>
        <fullName evidence="1">tRNA pseudouridylate synthase I</fullName>
    </alternativeName>
    <alternativeName>
        <fullName evidence="1">tRNA-uridine isomerase I</fullName>
    </alternativeName>
</protein>
<proteinExistence type="inferred from homology"/>
<name>TRUA_SHEDO</name>
<organism>
    <name type="scientific">Shewanella denitrificans (strain OS217 / ATCC BAA-1090 / DSM 15013)</name>
    <dbReference type="NCBI Taxonomy" id="318161"/>
    <lineage>
        <taxon>Bacteria</taxon>
        <taxon>Pseudomonadati</taxon>
        <taxon>Pseudomonadota</taxon>
        <taxon>Gammaproteobacteria</taxon>
        <taxon>Alteromonadales</taxon>
        <taxon>Shewanellaceae</taxon>
        <taxon>Shewanella</taxon>
    </lineage>
</organism>
<reference key="1">
    <citation type="submission" date="2006-03" db="EMBL/GenBank/DDBJ databases">
        <title>Complete sequence of Shewanella denitrificans OS217.</title>
        <authorList>
            <consortium name="US DOE Joint Genome Institute"/>
            <person name="Copeland A."/>
            <person name="Lucas S."/>
            <person name="Lapidus A."/>
            <person name="Barry K."/>
            <person name="Detter J.C."/>
            <person name="Glavina del Rio T."/>
            <person name="Hammon N."/>
            <person name="Israni S."/>
            <person name="Dalin E."/>
            <person name="Tice H."/>
            <person name="Pitluck S."/>
            <person name="Brettin T."/>
            <person name="Bruce D."/>
            <person name="Han C."/>
            <person name="Tapia R."/>
            <person name="Gilna P."/>
            <person name="Kiss H."/>
            <person name="Schmutz J."/>
            <person name="Larimer F."/>
            <person name="Land M."/>
            <person name="Hauser L."/>
            <person name="Kyrpides N."/>
            <person name="Lykidis A."/>
            <person name="Richardson P."/>
        </authorList>
    </citation>
    <scope>NUCLEOTIDE SEQUENCE [LARGE SCALE GENOMIC DNA]</scope>
    <source>
        <strain>OS217 / ATCC BAA-1090 / DSM 15013</strain>
    </source>
</reference>
<sequence length="261" mass="29268">MRVALGIEYDGSSYCGWQRQVEVDSVQAQLEKALSLIANEPIEVVCAGRTDAGVHGTGQVVHFDTTVIRPDSAWTLGVNANLPDTIAVRWVKLVDDSFHARFSATARRYRYVIYNHKFRPGLLRHGLSHYHGDIDETLMHQAAQQLLGEHDFTSFRAMQCQSKSPFRSVHEVNVTRQGMYIMVDIKANAFLHHMVRNIVGSLLEIGLGNQPLNWISKLIAVKDRRQAAATAKPNGLYLVDVTYPEEFAIPKLALGPLFMLD</sequence>